<organism>
    <name type="scientific">Arabidopsis thaliana</name>
    <name type="common">Mouse-ear cress</name>
    <dbReference type="NCBI Taxonomy" id="3702"/>
    <lineage>
        <taxon>Eukaryota</taxon>
        <taxon>Viridiplantae</taxon>
        <taxon>Streptophyta</taxon>
        <taxon>Embryophyta</taxon>
        <taxon>Tracheophyta</taxon>
        <taxon>Spermatophyta</taxon>
        <taxon>Magnoliopsida</taxon>
        <taxon>eudicotyledons</taxon>
        <taxon>Gunneridae</taxon>
        <taxon>Pentapetalae</taxon>
        <taxon>rosids</taxon>
        <taxon>malvids</taxon>
        <taxon>Brassicales</taxon>
        <taxon>Brassicaceae</taxon>
        <taxon>Camelineae</taxon>
        <taxon>Arabidopsis</taxon>
    </lineage>
</organism>
<protein>
    <recommendedName>
        <fullName>Putative two-component response regulator ARR20</fullName>
    </recommendedName>
</protein>
<dbReference type="EMBL" id="AL162651">
    <property type="protein sequence ID" value="CAB83117.1"/>
    <property type="molecule type" value="Genomic_DNA"/>
</dbReference>
<dbReference type="EMBL" id="CP002686">
    <property type="protein sequence ID" value="AEE80378.2"/>
    <property type="molecule type" value="Genomic_DNA"/>
</dbReference>
<dbReference type="PIR" id="T48056">
    <property type="entry name" value="T48056"/>
</dbReference>
<dbReference type="RefSeq" id="NP_001319821.1">
    <property type="nucleotide sequence ID" value="NM_001340168.1"/>
</dbReference>
<dbReference type="SMR" id="Q9LZJ8"/>
<dbReference type="BioGRID" id="10755">
    <property type="interactions" value="1"/>
</dbReference>
<dbReference type="FunCoup" id="Q9LZJ8">
    <property type="interactions" value="292"/>
</dbReference>
<dbReference type="STRING" id="3702.Q9LZJ8"/>
<dbReference type="GlyGen" id="Q9LZJ8">
    <property type="glycosylation" value="1 site"/>
</dbReference>
<dbReference type="PaxDb" id="3702-AT3G62670.1"/>
<dbReference type="EnsemblPlants" id="AT3G62670.1">
    <property type="protein sequence ID" value="AT3G62670.1"/>
    <property type="gene ID" value="AT3G62670"/>
</dbReference>
<dbReference type="GeneID" id="825441"/>
<dbReference type="Gramene" id="AT3G62670.1">
    <property type="protein sequence ID" value="AT3G62670.1"/>
    <property type="gene ID" value="AT3G62670"/>
</dbReference>
<dbReference type="KEGG" id="ath:AT3G62670"/>
<dbReference type="Araport" id="AT3G62670"/>
<dbReference type="TAIR" id="AT3G62670">
    <property type="gene designation" value="RR20"/>
</dbReference>
<dbReference type="eggNOG" id="KOG1601">
    <property type="taxonomic scope" value="Eukaryota"/>
</dbReference>
<dbReference type="HOGENOM" id="CLU_788339_0_0_1"/>
<dbReference type="InParanoid" id="Q9LZJ8"/>
<dbReference type="OMA" id="MTQFSYQ"/>
<dbReference type="PhylomeDB" id="Q9LZJ8"/>
<dbReference type="PRO" id="PR:Q9LZJ8"/>
<dbReference type="Proteomes" id="UP000006548">
    <property type="component" value="Chromosome 3"/>
</dbReference>
<dbReference type="ExpressionAtlas" id="Q9LZJ8">
    <property type="expression patterns" value="baseline and differential"/>
</dbReference>
<dbReference type="GO" id="GO:0005634">
    <property type="term" value="C:nucleus"/>
    <property type="evidence" value="ECO:0007669"/>
    <property type="project" value="UniProtKB-SubCell"/>
</dbReference>
<dbReference type="GO" id="GO:0003700">
    <property type="term" value="F:DNA-binding transcription factor activity"/>
    <property type="evidence" value="ECO:0000250"/>
    <property type="project" value="TAIR"/>
</dbReference>
<dbReference type="GO" id="GO:0000156">
    <property type="term" value="F:phosphorelay response regulator activity"/>
    <property type="evidence" value="ECO:0000250"/>
    <property type="project" value="TAIR"/>
</dbReference>
<dbReference type="GO" id="GO:0000976">
    <property type="term" value="F:transcription cis-regulatory region binding"/>
    <property type="evidence" value="ECO:0000353"/>
    <property type="project" value="TAIR"/>
</dbReference>
<dbReference type="GO" id="GO:0009736">
    <property type="term" value="P:cytokinin-activated signaling pathway"/>
    <property type="evidence" value="ECO:0000304"/>
    <property type="project" value="TAIR"/>
</dbReference>
<dbReference type="GO" id="GO:0009793">
    <property type="term" value="P:embryo development ending in seed dormancy"/>
    <property type="evidence" value="ECO:0000315"/>
    <property type="project" value="TAIR"/>
</dbReference>
<dbReference type="GO" id="GO:0006355">
    <property type="term" value="P:regulation of DNA-templated transcription"/>
    <property type="evidence" value="ECO:0000304"/>
    <property type="project" value="TAIR"/>
</dbReference>
<dbReference type="CDD" id="cd17584">
    <property type="entry name" value="REC_typeB_ARR-like"/>
    <property type="match status" value="1"/>
</dbReference>
<dbReference type="FunFam" id="1.10.10.60:FF:000007">
    <property type="entry name" value="Two-component response regulator"/>
    <property type="match status" value="1"/>
</dbReference>
<dbReference type="FunFam" id="3.40.50.2300:FF:000206">
    <property type="entry name" value="Two-component response regulator-like APRR2"/>
    <property type="match status" value="1"/>
</dbReference>
<dbReference type="Gene3D" id="3.40.50.2300">
    <property type="match status" value="1"/>
</dbReference>
<dbReference type="Gene3D" id="1.10.10.60">
    <property type="entry name" value="Homeodomain-like"/>
    <property type="match status" value="1"/>
</dbReference>
<dbReference type="InterPro" id="IPR045279">
    <property type="entry name" value="ARR-like"/>
</dbReference>
<dbReference type="InterPro" id="IPR011006">
    <property type="entry name" value="CheY-like_superfamily"/>
</dbReference>
<dbReference type="InterPro" id="IPR009057">
    <property type="entry name" value="Homeodomain-like_sf"/>
</dbReference>
<dbReference type="InterPro" id="IPR017930">
    <property type="entry name" value="Myb_dom"/>
</dbReference>
<dbReference type="InterPro" id="IPR006447">
    <property type="entry name" value="Myb_dom_plants"/>
</dbReference>
<dbReference type="InterPro" id="IPR017053">
    <property type="entry name" value="Response_reg_B-typ_pln"/>
</dbReference>
<dbReference type="InterPro" id="IPR001005">
    <property type="entry name" value="SANT/Myb"/>
</dbReference>
<dbReference type="InterPro" id="IPR001789">
    <property type="entry name" value="Sig_transdc_resp-reg_receiver"/>
</dbReference>
<dbReference type="NCBIfam" id="TIGR01557">
    <property type="entry name" value="myb_SHAQKYF"/>
    <property type="match status" value="1"/>
</dbReference>
<dbReference type="PANTHER" id="PTHR43874">
    <property type="entry name" value="TWO-COMPONENT RESPONSE REGULATOR"/>
    <property type="match status" value="1"/>
</dbReference>
<dbReference type="PANTHER" id="PTHR43874:SF82">
    <property type="entry name" value="TWO-COMPONENT RESPONSE REGULATOR ARR20-RELATED"/>
    <property type="match status" value="1"/>
</dbReference>
<dbReference type="Pfam" id="PF00249">
    <property type="entry name" value="Myb_DNA-binding"/>
    <property type="match status" value="1"/>
</dbReference>
<dbReference type="Pfam" id="PF00072">
    <property type="entry name" value="Response_reg"/>
    <property type="match status" value="1"/>
</dbReference>
<dbReference type="PIRSF" id="PIRSF036392">
    <property type="entry name" value="RR_ARR_type-B"/>
    <property type="match status" value="1"/>
</dbReference>
<dbReference type="SMART" id="SM00448">
    <property type="entry name" value="REC"/>
    <property type="match status" value="1"/>
</dbReference>
<dbReference type="SUPFAM" id="SSF52172">
    <property type="entry name" value="CheY-like"/>
    <property type="match status" value="1"/>
</dbReference>
<dbReference type="SUPFAM" id="SSF46689">
    <property type="entry name" value="Homeodomain-like"/>
    <property type="match status" value="1"/>
</dbReference>
<dbReference type="PROSITE" id="PS51294">
    <property type="entry name" value="HTH_MYB"/>
    <property type="match status" value="1"/>
</dbReference>
<dbReference type="PROSITE" id="PS50110">
    <property type="entry name" value="RESPONSE_REGULATORY"/>
    <property type="match status" value="1"/>
</dbReference>
<name>ARR20_ARATH</name>
<evidence type="ECO:0000250" key="1"/>
<evidence type="ECO:0000255" key="2"/>
<evidence type="ECO:0000255" key="3">
    <source>
        <dbReference type="PROSITE-ProRule" id="PRU00169"/>
    </source>
</evidence>
<evidence type="ECO:0000255" key="4">
    <source>
        <dbReference type="PROSITE-ProRule" id="PRU00625"/>
    </source>
</evidence>
<evidence type="ECO:0000256" key="5">
    <source>
        <dbReference type="SAM" id="MobiDB-lite"/>
    </source>
</evidence>
<evidence type="ECO:0000269" key="6">
    <source>
    </source>
</evidence>
<evidence type="ECO:0000305" key="7"/>
<accession>Q9LZJ8</accession>
<accession>F4IYC9</accession>
<reference key="1">
    <citation type="journal article" date="2000" name="Nature">
        <title>Sequence and analysis of chromosome 3 of the plant Arabidopsis thaliana.</title>
        <authorList>
            <person name="Salanoubat M."/>
            <person name="Lemcke K."/>
            <person name="Rieger M."/>
            <person name="Ansorge W."/>
            <person name="Unseld M."/>
            <person name="Fartmann B."/>
            <person name="Valle G."/>
            <person name="Bloecker H."/>
            <person name="Perez-Alonso M."/>
            <person name="Obermaier B."/>
            <person name="Delseny M."/>
            <person name="Boutry M."/>
            <person name="Grivell L.A."/>
            <person name="Mache R."/>
            <person name="Puigdomenech P."/>
            <person name="De Simone V."/>
            <person name="Choisne N."/>
            <person name="Artiguenave F."/>
            <person name="Robert C."/>
            <person name="Brottier P."/>
            <person name="Wincker P."/>
            <person name="Cattolico L."/>
            <person name="Weissenbach J."/>
            <person name="Saurin W."/>
            <person name="Quetier F."/>
            <person name="Schaefer M."/>
            <person name="Mueller-Auer S."/>
            <person name="Gabel C."/>
            <person name="Fuchs M."/>
            <person name="Benes V."/>
            <person name="Wurmbach E."/>
            <person name="Drzonek H."/>
            <person name="Erfle H."/>
            <person name="Jordan N."/>
            <person name="Bangert S."/>
            <person name="Wiedelmann R."/>
            <person name="Kranz H."/>
            <person name="Voss H."/>
            <person name="Holland R."/>
            <person name="Brandt P."/>
            <person name="Nyakatura G."/>
            <person name="Vezzi A."/>
            <person name="D'Angelo M."/>
            <person name="Pallavicini A."/>
            <person name="Toppo S."/>
            <person name="Simionati B."/>
            <person name="Conrad A."/>
            <person name="Hornischer K."/>
            <person name="Kauer G."/>
            <person name="Loehnert T.-H."/>
            <person name="Nordsiek G."/>
            <person name="Reichelt J."/>
            <person name="Scharfe M."/>
            <person name="Schoen O."/>
            <person name="Bargues M."/>
            <person name="Terol J."/>
            <person name="Climent J."/>
            <person name="Navarro P."/>
            <person name="Collado C."/>
            <person name="Perez-Perez A."/>
            <person name="Ottenwaelder B."/>
            <person name="Duchemin D."/>
            <person name="Cooke R."/>
            <person name="Laudie M."/>
            <person name="Berger-Llauro C."/>
            <person name="Purnelle B."/>
            <person name="Masuy D."/>
            <person name="de Haan M."/>
            <person name="Maarse A.C."/>
            <person name="Alcaraz J.-P."/>
            <person name="Cottet A."/>
            <person name="Casacuberta E."/>
            <person name="Monfort A."/>
            <person name="Argiriou A."/>
            <person name="Flores M."/>
            <person name="Liguori R."/>
            <person name="Vitale D."/>
            <person name="Mannhaupt G."/>
            <person name="Haase D."/>
            <person name="Schoof H."/>
            <person name="Rudd S."/>
            <person name="Zaccaria P."/>
            <person name="Mewes H.-W."/>
            <person name="Mayer K.F.X."/>
            <person name="Kaul S."/>
            <person name="Town C.D."/>
            <person name="Koo H.L."/>
            <person name="Tallon L.J."/>
            <person name="Jenkins J."/>
            <person name="Rooney T."/>
            <person name="Rizzo M."/>
            <person name="Walts A."/>
            <person name="Utterback T."/>
            <person name="Fujii C.Y."/>
            <person name="Shea T.P."/>
            <person name="Creasy T.H."/>
            <person name="Haas B."/>
            <person name="Maiti R."/>
            <person name="Wu D."/>
            <person name="Peterson J."/>
            <person name="Van Aken S."/>
            <person name="Pai G."/>
            <person name="Militscher J."/>
            <person name="Sellers P."/>
            <person name="Gill J.E."/>
            <person name="Feldblyum T.V."/>
            <person name="Preuss D."/>
            <person name="Lin X."/>
            <person name="Nierman W.C."/>
            <person name="Salzberg S.L."/>
            <person name="White O."/>
            <person name="Venter J.C."/>
            <person name="Fraser C.M."/>
            <person name="Kaneko T."/>
            <person name="Nakamura Y."/>
            <person name="Sato S."/>
            <person name="Kato T."/>
            <person name="Asamizu E."/>
            <person name="Sasamoto S."/>
            <person name="Kimura T."/>
            <person name="Idesawa K."/>
            <person name="Kawashima K."/>
            <person name="Kishida Y."/>
            <person name="Kiyokawa C."/>
            <person name="Kohara M."/>
            <person name="Matsumoto M."/>
            <person name="Matsuno A."/>
            <person name="Muraki A."/>
            <person name="Nakayama S."/>
            <person name="Nakazaki N."/>
            <person name="Shinpo S."/>
            <person name="Takeuchi C."/>
            <person name="Wada T."/>
            <person name="Watanabe A."/>
            <person name="Yamada M."/>
            <person name="Yasuda M."/>
            <person name="Tabata S."/>
        </authorList>
    </citation>
    <scope>NUCLEOTIDE SEQUENCE [LARGE SCALE GENOMIC DNA]</scope>
    <source>
        <strain>cv. Columbia</strain>
    </source>
</reference>
<reference key="2">
    <citation type="journal article" date="2017" name="Plant J.">
        <title>Araport11: a complete reannotation of the Arabidopsis thaliana reference genome.</title>
        <authorList>
            <person name="Cheng C.Y."/>
            <person name="Krishnakumar V."/>
            <person name="Chan A.P."/>
            <person name="Thibaud-Nissen F."/>
            <person name="Schobel S."/>
            <person name="Town C.D."/>
        </authorList>
    </citation>
    <scope>GENOME REANNOTATION</scope>
    <source>
        <strain>cv. Columbia</strain>
    </source>
</reference>
<reference key="3">
    <citation type="journal article" date="2004" name="Plant Physiol.">
        <title>Type-B response regulators display overlapping expression patterns in Arabidopsis.</title>
        <authorList>
            <person name="Mason M.G."/>
            <person name="Li J."/>
            <person name="Mathews D.E."/>
            <person name="Kieber J.J."/>
            <person name="Schaller G.E."/>
        </authorList>
    </citation>
    <scope>TISSUE SPECIFICITY</scope>
</reference>
<keyword id="KW-0010">Activator</keyword>
<keyword id="KW-0932">Cytokinin signaling pathway</keyword>
<keyword id="KW-0238">DNA-binding</keyword>
<keyword id="KW-0539">Nucleus</keyword>
<keyword id="KW-0597">Phosphoprotein</keyword>
<keyword id="KW-1185">Reference proteome</keyword>
<keyword id="KW-0804">Transcription</keyword>
<keyword id="KW-0805">Transcription regulation</keyword>
<keyword id="KW-0902">Two-component regulatory system</keyword>
<proteinExistence type="evidence at transcript level"/>
<feature type="chain" id="PRO_0000132302" description="Putative two-component response regulator ARR20">
    <location>
        <begin position="1"/>
        <end position="426"/>
    </location>
</feature>
<feature type="domain" description="Response regulatory" evidence="3">
    <location>
        <begin position="40"/>
        <end position="155"/>
    </location>
</feature>
<feature type="DNA-binding region" description="Myb-like GARP" evidence="4">
    <location>
        <begin position="213"/>
        <end position="268"/>
    </location>
</feature>
<feature type="region of interest" description="Disordered" evidence="5">
    <location>
        <begin position="161"/>
        <end position="216"/>
    </location>
</feature>
<feature type="short sequence motif" description="Nuclear localization signal" evidence="2">
    <location>
        <begin position="210"/>
        <end position="213"/>
    </location>
</feature>
<feature type="compositionally biased region" description="Acidic residues" evidence="5">
    <location>
        <begin position="175"/>
        <end position="193"/>
    </location>
</feature>
<feature type="compositionally biased region" description="Basic and acidic residues" evidence="5">
    <location>
        <begin position="194"/>
        <end position="208"/>
    </location>
</feature>
<feature type="modified residue" description="4-aspartylphosphate" evidence="3">
    <location>
        <position position="91"/>
    </location>
</feature>
<gene>
    <name type="primary">ARR20</name>
    <name type="ordered locus">At3g62670</name>
    <name type="ORF">F26K9_100</name>
</gene>
<sequence>MSVFSNILDENSRNLRNEIPCDDGIASPINDDDEEFLTKSNRVLLVGADSNSSLKNLMTQYSYQVTKYESGEEAMAFLMKNKHEIDLVIWDFHMPDINGLDALNIIGKQMDLPVVIMSHEYKKETVMESIKYGACDFLVKPVSKEVIAVLWRHVYRKRMSKSGLDKPGESGTVESDPDEYDDLEQDNLYESNEEGSKNTCDHKEEKSPTKKPRMQWTPELHHKFEVAVEKMGSLEKAFPKTILKYMQEELNVQGLTRNNVASHLQKYRQSSKKTCTPQEPQEDFVWGNAGPDVTLAASKTLLSSHATPSYLINNQAAPRGSYFMNNIPYPSTSCLPVNNNNCFMTNPSTYIDQFQHQLQQQQQHQQYQSTLNSISAMLTKQESRHVPSSAMENSEPLMIYNSNLPFGIDECFPPAGFNIFDQIGHN</sequence>
<comment type="function">
    <text evidence="1">Putative transcriptional activator that binds specifically to the DNA sequence 5'-[AG]GATT-3'. Functions as a response regulator involved in His-to-Asp phosphorelay signal transduction system. Phosphorylation of the Asp residue in the receiver domain activates the ability of the protein to promote the transcription of target genes. Could directly activate some type-A response regulators in response to cytokinins (By similarity).</text>
</comment>
<comment type="subunit">
    <text evidence="1">Binds the target DNA as a monomer.</text>
</comment>
<comment type="subcellular location">
    <subcellularLocation>
        <location>Nucleus</location>
    </subcellularLocation>
</comment>
<comment type="tissue specificity">
    <text evidence="6">Predominantly expressed in mature pistil tip. Also detected in the shoot apical meristem as well as vascular tissue and hydathodes of the leaves.</text>
</comment>
<comment type="PTM">
    <text>Two-component system major event consists of a His-to-Asp phosphorelay between a sensor histidine kinase (HK) and a response regulator (RR). In plants, the His-to-Asp phosphorelay involves an additional intermediate named Histidine-containing phosphotransfer protein (HPt). This multistep phosphorelay consists of a His-Asp-His-Asp sequential transfer of a phosphate group between first a His and an Asp of the HK protein, followed by the transfer to a conserved His of the HPt protein and finally the transfer to an Asp in the receiver domain of the RR protein.</text>
</comment>
<comment type="similarity">
    <text evidence="7">Belongs to the ARR family. Type-B subfamily.</text>
</comment>